<feature type="chain" id="PRO_0000170141" description="Large ribosomal subunit protein bL33">
    <location>
        <begin position="1"/>
        <end position="59"/>
    </location>
</feature>
<feature type="strand" evidence="2">
    <location>
        <begin position="10"/>
        <end position="17"/>
    </location>
</feature>
<feature type="turn" evidence="2">
    <location>
        <begin position="18"/>
        <end position="20"/>
    </location>
</feature>
<feature type="strand" evidence="2">
    <location>
        <begin position="25"/>
        <end position="30"/>
    </location>
</feature>
<feature type="turn" evidence="2">
    <location>
        <begin position="31"/>
        <end position="33"/>
    </location>
</feature>
<feature type="strand" evidence="2">
    <location>
        <begin position="39"/>
        <end position="44"/>
    </location>
</feature>
<feature type="turn" evidence="2">
    <location>
        <begin position="45"/>
        <end position="48"/>
    </location>
</feature>
<feature type="strand" evidence="2">
    <location>
        <begin position="49"/>
        <end position="56"/>
    </location>
</feature>
<evidence type="ECO:0000305" key="1"/>
<evidence type="ECO:0007829" key="2">
    <source>
        <dbReference type="PDB" id="8FN2"/>
    </source>
</evidence>
<reference key="1">
    <citation type="journal article" date="1997" name="Nature">
        <title>Genomic sequence of a Lyme disease spirochaete, Borrelia burgdorferi.</title>
        <authorList>
            <person name="Fraser C.M."/>
            <person name="Casjens S."/>
            <person name="Huang W.M."/>
            <person name="Sutton G.G."/>
            <person name="Clayton R.A."/>
            <person name="Lathigra R."/>
            <person name="White O."/>
            <person name="Ketchum K.A."/>
            <person name="Dodson R.J."/>
            <person name="Hickey E.K."/>
            <person name="Gwinn M.L."/>
            <person name="Dougherty B.A."/>
            <person name="Tomb J.-F."/>
            <person name="Fleischmann R.D."/>
            <person name="Richardson D.L."/>
            <person name="Peterson J.D."/>
            <person name="Kerlavage A.R."/>
            <person name="Quackenbush J."/>
            <person name="Salzberg S.L."/>
            <person name="Hanson M."/>
            <person name="van Vugt R."/>
            <person name="Palmer N."/>
            <person name="Adams M.D."/>
            <person name="Gocayne J.D."/>
            <person name="Weidman J.F."/>
            <person name="Utterback T.R."/>
            <person name="Watthey L."/>
            <person name="McDonald L.A."/>
            <person name="Artiach P."/>
            <person name="Bowman C."/>
            <person name="Garland S.A."/>
            <person name="Fujii C."/>
            <person name="Cotton M.D."/>
            <person name="Horst K."/>
            <person name="Roberts K.M."/>
            <person name="Hatch B."/>
            <person name="Smith H.O."/>
            <person name="Venter J.C."/>
        </authorList>
    </citation>
    <scope>NUCLEOTIDE SEQUENCE [LARGE SCALE GENOMIC DNA]</scope>
    <source>
        <strain>ATCC 35210 / DSM 4680 / CIP 102532 / B31</strain>
    </source>
</reference>
<protein>
    <recommendedName>
        <fullName evidence="1">Large ribosomal subunit protein bL33</fullName>
    </recommendedName>
    <alternativeName>
        <fullName>50S ribosomal protein L33</fullName>
    </alternativeName>
</protein>
<keyword id="KW-0002">3D-structure</keyword>
<keyword id="KW-1185">Reference proteome</keyword>
<keyword id="KW-0687">Ribonucleoprotein</keyword>
<keyword id="KW-0689">Ribosomal protein</keyword>
<dbReference type="EMBL" id="AE000783">
    <property type="protein sequence ID" value="AAC66769.1"/>
    <property type="molecule type" value="Genomic_DNA"/>
</dbReference>
<dbReference type="PIR" id="C70149">
    <property type="entry name" value="C70149"/>
</dbReference>
<dbReference type="RefSeq" id="NP_212530.1">
    <property type="nucleotide sequence ID" value="NC_001318.1"/>
</dbReference>
<dbReference type="RefSeq" id="WP_002556991.1">
    <property type="nucleotide sequence ID" value="NC_001318.1"/>
</dbReference>
<dbReference type="PDB" id="8FMW">
    <property type="method" value="EM"/>
    <property type="resolution" value="2.86 A"/>
    <property type="chains" value="Ae=9-59"/>
</dbReference>
<dbReference type="PDB" id="8FN2">
    <property type="method" value="EM"/>
    <property type="resolution" value="3.40 A"/>
    <property type="chains" value="e=9-59"/>
</dbReference>
<dbReference type="PDBsum" id="8FMW"/>
<dbReference type="PDBsum" id="8FN2"/>
<dbReference type="EMDB" id="EMD-29298"/>
<dbReference type="EMDB" id="EMD-29304"/>
<dbReference type="SMR" id="O51357"/>
<dbReference type="STRING" id="224326.BB_0396"/>
<dbReference type="PaxDb" id="224326-BB_0396"/>
<dbReference type="EnsemblBacteria" id="AAC66769">
    <property type="protein sequence ID" value="AAC66769"/>
    <property type="gene ID" value="BB_0396"/>
</dbReference>
<dbReference type="GeneID" id="77265235"/>
<dbReference type="KEGG" id="bbu:BB_0396"/>
<dbReference type="PATRIC" id="fig|224326.49.peg.790"/>
<dbReference type="HOGENOM" id="CLU_190949_0_2_12"/>
<dbReference type="OrthoDB" id="9801333at2"/>
<dbReference type="PRO" id="PR:O51357"/>
<dbReference type="Proteomes" id="UP000001807">
    <property type="component" value="Chromosome"/>
</dbReference>
<dbReference type="GO" id="GO:0005737">
    <property type="term" value="C:cytoplasm"/>
    <property type="evidence" value="ECO:0007669"/>
    <property type="project" value="UniProtKB-ARBA"/>
</dbReference>
<dbReference type="GO" id="GO:1990904">
    <property type="term" value="C:ribonucleoprotein complex"/>
    <property type="evidence" value="ECO:0007669"/>
    <property type="project" value="UniProtKB-KW"/>
</dbReference>
<dbReference type="GO" id="GO:0005840">
    <property type="term" value="C:ribosome"/>
    <property type="evidence" value="ECO:0007669"/>
    <property type="project" value="UniProtKB-KW"/>
</dbReference>
<dbReference type="GO" id="GO:0003735">
    <property type="term" value="F:structural constituent of ribosome"/>
    <property type="evidence" value="ECO:0007669"/>
    <property type="project" value="InterPro"/>
</dbReference>
<dbReference type="GO" id="GO:0006412">
    <property type="term" value="P:translation"/>
    <property type="evidence" value="ECO:0007669"/>
    <property type="project" value="UniProtKB-UniRule"/>
</dbReference>
<dbReference type="Gene3D" id="2.20.28.120">
    <property type="entry name" value="Ribosomal protein L33"/>
    <property type="match status" value="1"/>
</dbReference>
<dbReference type="HAMAP" id="MF_00294">
    <property type="entry name" value="Ribosomal_bL33"/>
    <property type="match status" value="1"/>
</dbReference>
<dbReference type="InterPro" id="IPR001705">
    <property type="entry name" value="Ribosomal_bL33"/>
</dbReference>
<dbReference type="InterPro" id="IPR018264">
    <property type="entry name" value="Ribosomal_bL33_CS"/>
</dbReference>
<dbReference type="InterPro" id="IPR038584">
    <property type="entry name" value="Ribosomal_bL33_sf"/>
</dbReference>
<dbReference type="InterPro" id="IPR011332">
    <property type="entry name" value="Ribosomal_zn-bd"/>
</dbReference>
<dbReference type="NCBIfam" id="NF001764">
    <property type="entry name" value="PRK00504.1"/>
    <property type="match status" value="1"/>
</dbReference>
<dbReference type="NCBIfam" id="NF001860">
    <property type="entry name" value="PRK00595.1"/>
    <property type="match status" value="1"/>
</dbReference>
<dbReference type="NCBIfam" id="TIGR01023">
    <property type="entry name" value="rpmG_bact"/>
    <property type="match status" value="1"/>
</dbReference>
<dbReference type="PANTHER" id="PTHR43168">
    <property type="entry name" value="50S RIBOSOMAL PROTEIN L33, CHLOROPLASTIC"/>
    <property type="match status" value="1"/>
</dbReference>
<dbReference type="PANTHER" id="PTHR43168:SF2">
    <property type="entry name" value="LARGE RIBOSOMAL SUBUNIT PROTEIN BL33C"/>
    <property type="match status" value="1"/>
</dbReference>
<dbReference type="Pfam" id="PF00471">
    <property type="entry name" value="Ribosomal_L33"/>
    <property type="match status" value="1"/>
</dbReference>
<dbReference type="SUPFAM" id="SSF57829">
    <property type="entry name" value="Zn-binding ribosomal proteins"/>
    <property type="match status" value="1"/>
</dbReference>
<dbReference type="PROSITE" id="PS00582">
    <property type="entry name" value="RIBOSOMAL_L33"/>
    <property type="match status" value="1"/>
</dbReference>
<proteinExistence type="evidence at protein level"/>
<comment type="similarity">
    <text evidence="1">Belongs to the bacterial ribosomal protein bL33 family.</text>
</comment>
<accession>O51357</accession>
<gene>
    <name type="primary">rpmG</name>
    <name type="ordered locus">BB_0396</name>
</gene>
<organism>
    <name type="scientific">Borreliella burgdorferi (strain ATCC 35210 / DSM 4680 / CIP 102532 / B31)</name>
    <name type="common">Borrelia burgdorferi</name>
    <dbReference type="NCBI Taxonomy" id="224326"/>
    <lineage>
        <taxon>Bacteria</taxon>
        <taxon>Pseudomonadati</taxon>
        <taxon>Spirochaetota</taxon>
        <taxon>Spirochaetia</taxon>
        <taxon>Spirochaetales</taxon>
        <taxon>Borreliaceae</taxon>
        <taxon>Borreliella</taxon>
    </lineage>
</organism>
<name>RL33_BORBU</name>
<sequence length="59" mass="6900">MGKKKGKGAVELISLICEETGIRNYTTTKNRRNKQEKLELMKYCPKLRKHTLHKEGKIK</sequence>